<proteinExistence type="evidence at protein level"/>
<comment type="function">
    <text evidence="2">Part of a multidrug efflux pump. Confers resistance to cationic lipophilic dyes such as ethidium bromide, acriflavine, pyronine Y and safranin O. The efflux is probably coupled to an influx of protons.</text>
</comment>
<comment type="subunit">
    <text evidence="4">The efflux pump is composed of EbrA and EbrB.</text>
</comment>
<comment type="subcellular location">
    <subcellularLocation>
        <location evidence="3">Cell membrane</location>
        <topology evidence="3">Multi-pass membrane protein</topology>
    </subcellularLocation>
</comment>
<comment type="similarity">
    <text evidence="3">Belongs to the drug/metabolite transporter (DMT) superfamily. Small multidrug resistance (SMR) (TC 2.A.7.1) family. EbrA/EbrB subfamily.</text>
</comment>
<comment type="sequence caution" evidence="3">
    <conflict type="erroneous initiation">
        <sequence resource="EMBL-CDS" id="BAA88576"/>
    </conflict>
    <text>Extended N-terminus.</text>
</comment>
<gene>
    <name type="primary">ebrB</name>
</gene>
<protein>
    <recommendedName>
        <fullName>Multidrug resistance protein EbrB</fullName>
    </recommendedName>
</protein>
<organism>
    <name type="scientific">Bacillus atrophaeus</name>
    <dbReference type="NCBI Taxonomy" id="1452"/>
    <lineage>
        <taxon>Bacteria</taxon>
        <taxon>Bacillati</taxon>
        <taxon>Bacillota</taxon>
        <taxon>Bacilli</taxon>
        <taxon>Bacillales</taxon>
        <taxon>Bacillaceae</taxon>
        <taxon>Bacillus</taxon>
    </lineage>
</organism>
<accession>P0CW83</accession>
<accession>O31791</accession>
<accession>Q9R9H9</accession>
<sequence>MKGLLYLALAIVSEVFGSTMLKLSEGFTQAWPIGGVIAGFLSAFTFLSFSLKTIDLSSAYATWSGVGTALTAIVGFLLFGETISLKGVFGLTLVIAGVVVLNQSKAPAKEKKQTVCE</sequence>
<evidence type="ECO:0000255" key="1"/>
<evidence type="ECO:0000269" key="2">
    <source>
    </source>
</evidence>
<evidence type="ECO:0000305" key="3"/>
<evidence type="ECO:0000305" key="4">
    <source>
    </source>
</evidence>
<dbReference type="EMBL" id="AB029306">
    <property type="protein sequence ID" value="BAA88576.1"/>
    <property type="status" value="ALT_INIT"/>
    <property type="molecule type" value="Genomic_DNA"/>
</dbReference>
<dbReference type="SMR" id="P0CW83"/>
<dbReference type="STRING" id="1452.TD68_05900"/>
<dbReference type="GO" id="GO:0005886">
    <property type="term" value="C:plasma membrane"/>
    <property type="evidence" value="ECO:0007669"/>
    <property type="project" value="UniProtKB-SubCell"/>
</dbReference>
<dbReference type="GO" id="GO:0022857">
    <property type="term" value="F:transmembrane transporter activity"/>
    <property type="evidence" value="ECO:0007669"/>
    <property type="project" value="InterPro"/>
</dbReference>
<dbReference type="FunFam" id="1.10.3730.20:FF:000001">
    <property type="entry name" value="Quaternary ammonium compound resistance transporter SugE"/>
    <property type="match status" value="1"/>
</dbReference>
<dbReference type="Gene3D" id="1.10.3730.20">
    <property type="match status" value="1"/>
</dbReference>
<dbReference type="InterPro" id="IPR000390">
    <property type="entry name" value="Small_drug/metabolite_transptr"/>
</dbReference>
<dbReference type="InterPro" id="IPR045324">
    <property type="entry name" value="Small_multidrug_res"/>
</dbReference>
<dbReference type="PANTHER" id="PTHR30561:SF1">
    <property type="entry name" value="MULTIDRUG TRANSPORTER EMRE"/>
    <property type="match status" value="1"/>
</dbReference>
<dbReference type="PANTHER" id="PTHR30561">
    <property type="entry name" value="SMR FAMILY PROTON-DEPENDENT DRUG EFFLUX TRANSPORTER SUGE"/>
    <property type="match status" value="1"/>
</dbReference>
<dbReference type="Pfam" id="PF00893">
    <property type="entry name" value="Multi_Drug_Res"/>
    <property type="match status" value="1"/>
</dbReference>
<dbReference type="SUPFAM" id="SSF103481">
    <property type="entry name" value="Multidrug resistance efflux transporter EmrE"/>
    <property type="match status" value="1"/>
</dbReference>
<keyword id="KW-1003">Cell membrane</keyword>
<keyword id="KW-0472">Membrane</keyword>
<keyword id="KW-0812">Transmembrane</keyword>
<keyword id="KW-1133">Transmembrane helix</keyword>
<keyword id="KW-0813">Transport</keyword>
<name>EBRB_BACAT</name>
<feature type="chain" id="PRO_0000408957" description="Multidrug resistance protein EbrB">
    <location>
        <begin position="1"/>
        <end position="117"/>
    </location>
</feature>
<feature type="transmembrane region" description="Helical" evidence="1">
    <location>
        <begin position="3"/>
        <end position="23"/>
    </location>
</feature>
<feature type="transmembrane region" description="Helical" evidence="1">
    <location>
        <begin position="31"/>
        <end position="51"/>
    </location>
</feature>
<feature type="transmembrane region" description="Helical" evidence="1">
    <location>
        <begin position="59"/>
        <end position="79"/>
    </location>
</feature>
<feature type="transmembrane region" description="Helical" evidence="1">
    <location>
        <begin position="81"/>
        <end position="101"/>
    </location>
</feature>
<reference key="1">
    <citation type="journal article" date="2000" name="J. Bacteriol.">
        <title>A two-component multidrug efflux pump, EbrAB, in Bacillus subtilis.</title>
        <authorList>
            <person name="Masaoka Y."/>
            <person name="Ueno Y."/>
            <person name="Morita Y."/>
            <person name="Kuroda T."/>
            <person name="Mizushima T."/>
            <person name="Tsuchiya T."/>
        </authorList>
    </citation>
    <scope>NUCLEOTIDE SEQUENCE [GENOMIC DNA]</scope>
    <scope>FUNCTION</scope>
    <scope>SUBUNIT</scope>
    <source>
        <strain>ATCC 9372 / DSM 675 / NBRC 13721 / NCIMB 8058 / NRS 1221A</strain>
    </source>
</reference>